<name>QSEC_SALTY</name>
<proteinExistence type="inferred from homology"/>
<protein>
    <recommendedName>
        <fullName>Sensor protein QseC</fullName>
        <ecNumber>2.7.13.3</ecNumber>
    </recommendedName>
</protein>
<sequence>MKLTQRLSLRVRLTLIFLILVSITWAISSFVAWRKTTDNVDELFDTQLMLFARRLSTLDLNEINAPQRMAHTPKKLKHGHIDDDALAFAIFSADGKMLLHDGDNGQDIPYRYRREGFDNGYLKDDNDLWRFLWLNSADGKYRIVVGQEWDYREDMALAIVAAQLTPWLIALPFMLLILLLLLHRELRPLKKLAQALRFRSPESETPLDAKGVPSEVRPLVEALNQLFSRIHSMMVRERRFTSDAAHELRSPLAALKVQTEVAQLSGDDPLSRDKALTQLHAGIDRATRLVDQLLTLSRLDSLNNLQDVAEISLEELLQSAVMDIYHPAQQANIDVRLQLNAHDVIRTGQPLLLSLLVRNLLDNAIRYSPQGSVVDVTLHARSFTVRDNGPGVAPEILTHIGERFYRPPGQSVTGSGLGLSIVRRIATLHGMTVSFGNAAEGGFEAVVSW</sequence>
<evidence type="ECO:0000250" key="1"/>
<evidence type="ECO:0000255" key="2"/>
<evidence type="ECO:0000255" key="3">
    <source>
        <dbReference type="PROSITE-ProRule" id="PRU00102"/>
    </source>
</evidence>
<evidence type="ECO:0000255" key="4">
    <source>
        <dbReference type="PROSITE-ProRule" id="PRU00107"/>
    </source>
</evidence>
<gene>
    <name type="primary">qseC</name>
    <name type="ordered locus">STM3178</name>
</gene>
<accession>Q8ZLZ9</accession>
<feature type="chain" id="PRO_0000074707" description="Sensor protein QseC">
    <location>
        <begin position="1"/>
        <end position="449"/>
    </location>
</feature>
<feature type="topological domain" description="Cytoplasmic" evidence="2">
    <location>
        <begin position="1"/>
        <end position="12"/>
    </location>
</feature>
<feature type="transmembrane region" description="Helical" evidence="2">
    <location>
        <begin position="13"/>
        <end position="33"/>
    </location>
</feature>
<feature type="topological domain" description="Periplasmic" evidence="2">
    <location>
        <begin position="34"/>
        <end position="161"/>
    </location>
</feature>
<feature type="transmembrane region" description="Helical" evidence="2">
    <location>
        <begin position="162"/>
        <end position="182"/>
    </location>
</feature>
<feature type="topological domain" description="Cytoplasmic" evidence="2">
    <location>
        <begin position="183"/>
        <end position="449"/>
    </location>
</feature>
<feature type="domain" description="HAMP" evidence="3">
    <location>
        <begin position="183"/>
        <end position="235"/>
    </location>
</feature>
<feature type="domain" description="Histidine kinase" evidence="4">
    <location>
        <begin position="243"/>
        <end position="449"/>
    </location>
</feature>
<feature type="modified residue" description="Phosphohistidine; by autocatalysis" evidence="4">
    <location>
        <position position="246"/>
    </location>
</feature>
<dbReference type="EC" id="2.7.13.3"/>
<dbReference type="EMBL" id="AE006468">
    <property type="protein sequence ID" value="AAL22052.1"/>
    <property type="molecule type" value="Genomic_DNA"/>
</dbReference>
<dbReference type="RefSeq" id="WP_000779328.1">
    <property type="nucleotide sequence ID" value="NC_003197.2"/>
</dbReference>
<dbReference type="SMR" id="Q8ZLZ9"/>
<dbReference type="STRING" id="99287.STM3178"/>
<dbReference type="PaxDb" id="99287-STM3178"/>
<dbReference type="KEGG" id="stm:STM3178"/>
<dbReference type="PATRIC" id="fig|99287.12.peg.3369"/>
<dbReference type="HOGENOM" id="CLU_000445_89_37_6"/>
<dbReference type="OMA" id="WRIFWLP"/>
<dbReference type="PhylomeDB" id="Q8ZLZ9"/>
<dbReference type="BioCyc" id="SENT99287:STM3178-MONOMER"/>
<dbReference type="BRENDA" id="2.7.13.3">
    <property type="organism ID" value="5542"/>
</dbReference>
<dbReference type="PHI-base" id="PHI:12146"/>
<dbReference type="Proteomes" id="UP000001014">
    <property type="component" value="Chromosome"/>
</dbReference>
<dbReference type="GO" id="GO:0005886">
    <property type="term" value="C:plasma membrane"/>
    <property type="evidence" value="ECO:0000318"/>
    <property type="project" value="GO_Central"/>
</dbReference>
<dbReference type="GO" id="GO:0005524">
    <property type="term" value="F:ATP binding"/>
    <property type="evidence" value="ECO:0007669"/>
    <property type="project" value="UniProtKB-KW"/>
</dbReference>
<dbReference type="GO" id="GO:0000155">
    <property type="term" value="F:phosphorelay sensor kinase activity"/>
    <property type="evidence" value="ECO:0007669"/>
    <property type="project" value="InterPro"/>
</dbReference>
<dbReference type="GO" id="GO:0000160">
    <property type="term" value="P:phosphorelay signal transduction system"/>
    <property type="evidence" value="ECO:0000318"/>
    <property type="project" value="GO_Central"/>
</dbReference>
<dbReference type="CDD" id="cd00082">
    <property type="entry name" value="HisKA"/>
    <property type="match status" value="1"/>
</dbReference>
<dbReference type="FunFam" id="1.20.5.1040:FF:000001">
    <property type="entry name" value="Sensor histidine kinase QseC"/>
    <property type="match status" value="1"/>
</dbReference>
<dbReference type="FunFam" id="1.20.5.1040:FF:000002">
    <property type="entry name" value="Sensor histidine kinase QseC"/>
    <property type="match status" value="1"/>
</dbReference>
<dbReference type="FunFam" id="1.10.287.130:FF:000035">
    <property type="entry name" value="Two-component sensor histidine kinase"/>
    <property type="match status" value="1"/>
</dbReference>
<dbReference type="FunFam" id="3.30.565.10:FF:000055">
    <property type="entry name" value="Two-component sensor histidine kinase"/>
    <property type="match status" value="1"/>
</dbReference>
<dbReference type="Gene3D" id="1.10.287.130">
    <property type="match status" value="1"/>
</dbReference>
<dbReference type="Gene3D" id="3.30.565.10">
    <property type="entry name" value="Histidine kinase-like ATPase, C-terminal domain"/>
    <property type="match status" value="1"/>
</dbReference>
<dbReference type="Gene3D" id="1.20.5.1040">
    <property type="entry name" value="Sensor protein qsec"/>
    <property type="match status" value="2"/>
</dbReference>
<dbReference type="InterPro" id="IPR003660">
    <property type="entry name" value="HAMP_dom"/>
</dbReference>
<dbReference type="InterPro" id="IPR036890">
    <property type="entry name" value="HATPase_C_sf"/>
</dbReference>
<dbReference type="InterPro" id="IPR005467">
    <property type="entry name" value="His_kinase_dom"/>
</dbReference>
<dbReference type="InterPro" id="IPR003661">
    <property type="entry name" value="HisK_dim/P_dom"/>
</dbReference>
<dbReference type="InterPro" id="IPR036097">
    <property type="entry name" value="HisK_dim/P_sf"/>
</dbReference>
<dbReference type="InterPro" id="IPR004358">
    <property type="entry name" value="Sig_transdc_His_kin-like_C"/>
</dbReference>
<dbReference type="InterPro" id="IPR050428">
    <property type="entry name" value="TCS_sensor_his_kinase"/>
</dbReference>
<dbReference type="NCBIfam" id="NF007664">
    <property type="entry name" value="PRK10337.1"/>
    <property type="match status" value="1"/>
</dbReference>
<dbReference type="PANTHER" id="PTHR45436">
    <property type="entry name" value="SENSOR HISTIDINE KINASE YKOH"/>
    <property type="match status" value="1"/>
</dbReference>
<dbReference type="PANTHER" id="PTHR45436:SF14">
    <property type="entry name" value="SENSOR PROTEIN QSEC"/>
    <property type="match status" value="1"/>
</dbReference>
<dbReference type="Pfam" id="PF02518">
    <property type="entry name" value="HATPase_c"/>
    <property type="match status" value="1"/>
</dbReference>
<dbReference type="Pfam" id="PF00512">
    <property type="entry name" value="HisKA"/>
    <property type="match status" value="1"/>
</dbReference>
<dbReference type="PRINTS" id="PR00344">
    <property type="entry name" value="BCTRLSENSOR"/>
</dbReference>
<dbReference type="SMART" id="SM00387">
    <property type="entry name" value="HATPase_c"/>
    <property type="match status" value="1"/>
</dbReference>
<dbReference type="SMART" id="SM00388">
    <property type="entry name" value="HisKA"/>
    <property type="match status" value="1"/>
</dbReference>
<dbReference type="SUPFAM" id="SSF55874">
    <property type="entry name" value="ATPase domain of HSP90 chaperone/DNA topoisomerase II/histidine kinase"/>
    <property type="match status" value="1"/>
</dbReference>
<dbReference type="SUPFAM" id="SSF47384">
    <property type="entry name" value="Homodimeric domain of signal transducing histidine kinase"/>
    <property type="match status" value="1"/>
</dbReference>
<dbReference type="PROSITE" id="PS50885">
    <property type="entry name" value="HAMP"/>
    <property type="match status" value="1"/>
</dbReference>
<dbReference type="PROSITE" id="PS50109">
    <property type="entry name" value="HIS_KIN"/>
    <property type="match status" value="1"/>
</dbReference>
<organism>
    <name type="scientific">Salmonella typhimurium (strain LT2 / SGSC1412 / ATCC 700720)</name>
    <dbReference type="NCBI Taxonomy" id="99287"/>
    <lineage>
        <taxon>Bacteria</taxon>
        <taxon>Pseudomonadati</taxon>
        <taxon>Pseudomonadota</taxon>
        <taxon>Gammaproteobacteria</taxon>
        <taxon>Enterobacterales</taxon>
        <taxon>Enterobacteriaceae</taxon>
        <taxon>Salmonella</taxon>
    </lineage>
</organism>
<comment type="function">
    <text evidence="1">Member of a two-component regulatory system QseB/QseC. Activates the flagella regulon by activating transcription of FlhDC. May activate QseB by phosphorylation (By similarity).</text>
</comment>
<comment type="catalytic activity">
    <reaction>
        <text>ATP + protein L-histidine = ADP + protein N-phospho-L-histidine.</text>
        <dbReference type="EC" id="2.7.13.3"/>
    </reaction>
</comment>
<comment type="subcellular location">
    <subcellularLocation>
        <location evidence="1">Cell inner membrane</location>
        <topology evidence="1">Multi-pass membrane protein</topology>
    </subcellularLocation>
</comment>
<keyword id="KW-0067">ATP-binding</keyword>
<keyword id="KW-0997">Cell inner membrane</keyword>
<keyword id="KW-1003">Cell membrane</keyword>
<keyword id="KW-0418">Kinase</keyword>
<keyword id="KW-0472">Membrane</keyword>
<keyword id="KW-0547">Nucleotide-binding</keyword>
<keyword id="KW-0597">Phosphoprotein</keyword>
<keyword id="KW-1185">Reference proteome</keyword>
<keyword id="KW-0808">Transferase</keyword>
<keyword id="KW-0812">Transmembrane</keyword>
<keyword id="KW-1133">Transmembrane helix</keyword>
<keyword id="KW-0902">Two-component regulatory system</keyword>
<reference key="1">
    <citation type="journal article" date="2001" name="Nature">
        <title>Complete genome sequence of Salmonella enterica serovar Typhimurium LT2.</title>
        <authorList>
            <person name="McClelland M."/>
            <person name="Sanderson K.E."/>
            <person name="Spieth J."/>
            <person name="Clifton S.W."/>
            <person name="Latreille P."/>
            <person name="Courtney L."/>
            <person name="Porwollik S."/>
            <person name="Ali J."/>
            <person name="Dante M."/>
            <person name="Du F."/>
            <person name="Hou S."/>
            <person name="Layman D."/>
            <person name="Leonard S."/>
            <person name="Nguyen C."/>
            <person name="Scott K."/>
            <person name="Holmes A."/>
            <person name="Grewal N."/>
            <person name="Mulvaney E."/>
            <person name="Ryan E."/>
            <person name="Sun H."/>
            <person name="Florea L."/>
            <person name="Miller W."/>
            <person name="Stoneking T."/>
            <person name="Nhan M."/>
            <person name="Waterston R."/>
            <person name="Wilson R.K."/>
        </authorList>
    </citation>
    <scope>NUCLEOTIDE SEQUENCE [LARGE SCALE GENOMIC DNA]</scope>
    <source>
        <strain>LT2 / SGSC1412 / ATCC 700720</strain>
    </source>
</reference>